<comment type="function">
    <text evidence="1">Catalytic subunit of the molybdopterin synthase complex, a complex that catalyzes the conversion of precursor Z into molybdopterin. Acts by mediating the incorporation of 2 sulfur atoms from thiocarboxylated MOCS2A into precursor Z to generate a dithiolene group.</text>
</comment>
<comment type="catalytic activity">
    <reaction evidence="1">
        <text>2 [molybdopterin-synthase sulfur-carrier protein]-C-terminal-Gly-aminoethanethioate + cyclic pyranopterin phosphate + H2O = molybdopterin + 2 [molybdopterin-synthase sulfur-carrier protein]-C-terminal Gly-Gly + 2 H(+)</text>
        <dbReference type="Rhea" id="RHEA:26333"/>
        <dbReference type="Rhea" id="RHEA-COMP:12202"/>
        <dbReference type="Rhea" id="RHEA-COMP:19907"/>
        <dbReference type="ChEBI" id="CHEBI:15377"/>
        <dbReference type="ChEBI" id="CHEBI:15378"/>
        <dbReference type="ChEBI" id="CHEBI:58698"/>
        <dbReference type="ChEBI" id="CHEBI:59648"/>
        <dbReference type="ChEBI" id="CHEBI:90778"/>
        <dbReference type="ChEBI" id="CHEBI:232372"/>
        <dbReference type="EC" id="2.8.1.12"/>
    </reaction>
</comment>
<comment type="pathway">
    <text evidence="1">Cofactor biosynthesis; molybdopterin biosynthesis.</text>
</comment>
<comment type="subunit">
    <text evidence="1">Heterotetramer; composed of 2 small (MOCS2A) and 2 large (MOCS2B) subunits.</text>
</comment>
<comment type="subcellular location">
    <subcellularLocation>
        <location evidence="1">Cytoplasm</location>
    </subcellularLocation>
</comment>
<comment type="similarity">
    <text evidence="1">Belongs to the MoaE family. MOCS2B subfamily.</text>
</comment>
<reference key="1">
    <citation type="journal article" date="1999" name="J. Biol. Chem.">
        <title>Eukaryotic molybdopterin synthase. Biochemical and molecular studies of Aspergillus nidulans cnxG and cnxH mutants.</title>
        <authorList>
            <person name="Unkles S.E."/>
            <person name="Heck I.S."/>
            <person name="Appleyard M.V.C.L."/>
            <person name="Kinghorn J.R."/>
        </authorList>
    </citation>
    <scope>NUCLEOTIDE SEQUENCE [GENOMIC DNA]</scope>
    <scope>MUTAGENESIS OF GLY-74; ALA-108; GLY-148; GLU-166 AND ARG-195</scope>
</reference>
<reference key="2">
    <citation type="journal article" date="2005" name="Nature">
        <title>Sequencing of Aspergillus nidulans and comparative analysis with A. fumigatus and A. oryzae.</title>
        <authorList>
            <person name="Galagan J.E."/>
            <person name="Calvo S.E."/>
            <person name="Cuomo C."/>
            <person name="Ma L.-J."/>
            <person name="Wortman J.R."/>
            <person name="Batzoglou S."/>
            <person name="Lee S.-I."/>
            <person name="Bastuerkmen M."/>
            <person name="Spevak C.C."/>
            <person name="Clutterbuck J."/>
            <person name="Kapitonov V."/>
            <person name="Jurka J."/>
            <person name="Scazzocchio C."/>
            <person name="Farman M.L."/>
            <person name="Butler J."/>
            <person name="Purcell S."/>
            <person name="Harris S."/>
            <person name="Braus G.H."/>
            <person name="Draht O."/>
            <person name="Busch S."/>
            <person name="D'Enfert C."/>
            <person name="Bouchier C."/>
            <person name="Goldman G.H."/>
            <person name="Bell-Pedersen D."/>
            <person name="Griffiths-Jones S."/>
            <person name="Doonan J.H."/>
            <person name="Yu J."/>
            <person name="Vienken K."/>
            <person name="Pain A."/>
            <person name="Freitag M."/>
            <person name="Selker E.U."/>
            <person name="Archer D.B."/>
            <person name="Penalva M.A."/>
            <person name="Oakley B.R."/>
            <person name="Momany M."/>
            <person name="Tanaka T."/>
            <person name="Kumagai T."/>
            <person name="Asai K."/>
            <person name="Machida M."/>
            <person name="Nierman W.C."/>
            <person name="Denning D.W."/>
            <person name="Caddick M.X."/>
            <person name="Hynes M."/>
            <person name="Paoletti M."/>
            <person name="Fischer R."/>
            <person name="Miller B.L."/>
            <person name="Dyer P.S."/>
            <person name="Sachs M.S."/>
            <person name="Osmani S.A."/>
            <person name="Birren B.W."/>
        </authorList>
    </citation>
    <scope>NUCLEOTIDE SEQUENCE [LARGE SCALE GENOMIC DNA]</scope>
    <source>
        <strain>FGSC A4 / ATCC 38163 / CBS 112.46 / NRRL 194 / M139</strain>
    </source>
</reference>
<reference key="3">
    <citation type="journal article" date="2009" name="Fungal Genet. Biol.">
        <title>The 2008 update of the Aspergillus nidulans genome annotation: a community effort.</title>
        <authorList>
            <person name="Wortman J.R."/>
            <person name="Gilsenan J.M."/>
            <person name="Joardar V."/>
            <person name="Deegan J."/>
            <person name="Clutterbuck J."/>
            <person name="Andersen M.R."/>
            <person name="Archer D."/>
            <person name="Bencina M."/>
            <person name="Braus G."/>
            <person name="Coutinho P."/>
            <person name="von Dohren H."/>
            <person name="Doonan J."/>
            <person name="Driessen A.J."/>
            <person name="Durek P."/>
            <person name="Espeso E."/>
            <person name="Fekete E."/>
            <person name="Flipphi M."/>
            <person name="Estrada C.G."/>
            <person name="Geysens S."/>
            <person name="Goldman G."/>
            <person name="de Groot P.W."/>
            <person name="Hansen K."/>
            <person name="Harris S.D."/>
            <person name="Heinekamp T."/>
            <person name="Helmstaedt K."/>
            <person name="Henrissat B."/>
            <person name="Hofmann G."/>
            <person name="Homan T."/>
            <person name="Horio T."/>
            <person name="Horiuchi H."/>
            <person name="James S."/>
            <person name="Jones M."/>
            <person name="Karaffa L."/>
            <person name="Karanyi Z."/>
            <person name="Kato M."/>
            <person name="Keller N."/>
            <person name="Kelly D.E."/>
            <person name="Kiel J.A."/>
            <person name="Kim J.M."/>
            <person name="van der Klei I.J."/>
            <person name="Klis F.M."/>
            <person name="Kovalchuk A."/>
            <person name="Krasevec N."/>
            <person name="Kubicek C.P."/>
            <person name="Liu B."/>
            <person name="Maccabe A."/>
            <person name="Meyer V."/>
            <person name="Mirabito P."/>
            <person name="Miskei M."/>
            <person name="Mos M."/>
            <person name="Mullins J."/>
            <person name="Nelson D.R."/>
            <person name="Nielsen J."/>
            <person name="Oakley B.R."/>
            <person name="Osmani S.A."/>
            <person name="Pakula T."/>
            <person name="Paszewski A."/>
            <person name="Paulsen I."/>
            <person name="Pilsyk S."/>
            <person name="Pocsi I."/>
            <person name="Punt P.J."/>
            <person name="Ram A.F."/>
            <person name="Ren Q."/>
            <person name="Robellet X."/>
            <person name="Robson G."/>
            <person name="Seiboth B."/>
            <person name="van Solingen P."/>
            <person name="Specht T."/>
            <person name="Sun J."/>
            <person name="Taheri-Talesh N."/>
            <person name="Takeshita N."/>
            <person name="Ussery D."/>
            <person name="vanKuyk P.A."/>
            <person name="Visser H."/>
            <person name="van de Vondervoort P.J."/>
            <person name="de Vries R.P."/>
            <person name="Walton J."/>
            <person name="Xiang X."/>
            <person name="Xiong Y."/>
            <person name="Zeng A.P."/>
            <person name="Brandt B.W."/>
            <person name="Cornell M.J."/>
            <person name="van den Hondel C.A."/>
            <person name="Visser J."/>
            <person name="Oliver S.G."/>
            <person name="Turner G."/>
        </authorList>
    </citation>
    <scope>GENOME REANNOTATION</scope>
    <source>
        <strain>FGSC A4 / ATCC 38163 / CBS 112.46 / NRRL 194 / M139</strain>
    </source>
</reference>
<name>MOC2B_EMENI</name>
<keyword id="KW-0963">Cytoplasm</keyword>
<keyword id="KW-0501">Molybdenum cofactor biosynthesis</keyword>
<keyword id="KW-1185">Reference proteome</keyword>
<keyword id="KW-0808">Transferase</keyword>
<gene>
    <name evidence="1" type="primary">cnxH</name>
    <name type="ORF">AN4841</name>
</gene>
<protein>
    <recommendedName>
        <fullName evidence="1">Molybdopterin synthase catalytic subunit</fullName>
        <ecNumber evidence="1">2.8.1.12</ecNumber>
    </recommendedName>
    <alternativeName>
        <fullName evidence="1">Common component for nitrate reductase and xanthine dehydrogenase protein H</fullName>
    </alternativeName>
    <alternativeName>
        <fullName evidence="1">Molybdenum cofactor synthesis protein 2 large subunit</fullName>
    </alternativeName>
    <alternativeName>
        <fullName evidence="1">Molybdenum cofactor synthesis protein 2B</fullName>
        <shortName evidence="1">MOCS2B</shortName>
    </alternativeName>
</protein>
<dbReference type="EC" id="2.8.1.12" evidence="1"/>
<dbReference type="EMBL" id="AF138285">
    <property type="protein sequence ID" value="AAD39471.1"/>
    <property type="molecule type" value="Genomic_DNA"/>
</dbReference>
<dbReference type="EMBL" id="AACD01000083">
    <property type="protein sequence ID" value="EAA60076.1"/>
    <property type="molecule type" value="Genomic_DNA"/>
</dbReference>
<dbReference type="EMBL" id="BN001303">
    <property type="protein sequence ID" value="CBF76656.1"/>
    <property type="molecule type" value="Genomic_DNA"/>
</dbReference>
<dbReference type="RefSeq" id="XP_662445.1">
    <property type="nucleotide sequence ID" value="XM_657353.1"/>
</dbReference>
<dbReference type="SMR" id="Q9Y8C1"/>
<dbReference type="STRING" id="227321.Q9Y8C1"/>
<dbReference type="EnsemblFungi" id="CBF76656">
    <property type="protein sequence ID" value="CBF76656"/>
    <property type="gene ID" value="ANIA_04841"/>
</dbReference>
<dbReference type="KEGG" id="ani:ANIA_04841"/>
<dbReference type="VEuPathDB" id="FungiDB:AN4841"/>
<dbReference type="eggNOG" id="KOG3307">
    <property type="taxonomic scope" value="Eukaryota"/>
</dbReference>
<dbReference type="HOGENOM" id="CLU_089568_3_1_1"/>
<dbReference type="InParanoid" id="Q9Y8C1"/>
<dbReference type="OMA" id="WKHQFFA"/>
<dbReference type="OrthoDB" id="5531344at2759"/>
<dbReference type="BRENDA" id="2.8.1.12">
    <property type="organism ID" value="517"/>
</dbReference>
<dbReference type="UniPathway" id="UPA00344"/>
<dbReference type="Proteomes" id="UP000000560">
    <property type="component" value="Chromosome III"/>
</dbReference>
<dbReference type="GO" id="GO:0005829">
    <property type="term" value="C:cytosol"/>
    <property type="evidence" value="ECO:0000318"/>
    <property type="project" value="GO_Central"/>
</dbReference>
<dbReference type="GO" id="GO:1990140">
    <property type="term" value="C:molybdopterin synthase complex"/>
    <property type="evidence" value="ECO:0000250"/>
    <property type="project" value="UniProtKB"/>
</dbReference>
<dbReference type="GO" id="GO:0030366">
    <property type="term" value="F:molybdopterin synthase activity"/>
    <property type="evidence" value="ECO:0007669"/>
    <property type="project" value="UniProtKB-UniRule"/>
</dbReference>
<dbReference type="GO" id="GO:0006777">
    <property type="term" value="P:Mo-molybdopterin cofactor biosynthetic process"/>
    <property type="evidence" value="ECO:0000250"/>
    <property type="project" value="UniProtKB"/>
</dbReference>
<dbReference type="GO" id="GO:0032324">
    <property type="term" value="P:molybdopterin cofactor biosynthetic process"/>
    <property type="evidence" value="ECO:0000315"/>
    <property type="project" value="AspGD"/>
</dbReference>
<dbReference type="CDD" id="cd00756">
    <property type="entry name" value="MoaE"/>
    <property type="match status" value="1"/>
</dbReference>
<dbReference type="FunFam" id="3.90.1170.40:FF:000003">
    <property type="entry name" value="Molybdopterin converting factor subunit 2"/>
    <property type="match status" value="1"/>
</dbReference>
<dbReference type="Gene3D" id="3.90.1170.40">
    <property type="entry name" value="Molybdopterin biosynthesis MoaE subunit"/>
    <property type="match status" value="1"/>
</dbReference>
<dbReference type="HAMAP" id="MF_03052">
    <property type="entry name" value="MOC2B"/>
    <property type="match status" value="1"/>
</dbReference>
<dbReference type="InterPro" id="IPR036563">
    <property type="entry name" value="MoaE_sf"/>
</dbReference>
<dbReference type="InterPro" id="IPR028888">
    <property type="entry name" value="MOCS2B_euk"/>
</dbReference>
<dbReference type="InterPro" id="IPR003448">
    <property type="entry name" value="Mopterin_biosynth_MoaE"/>
</dbReference>
<dbReference type="PANTHER" id="PTHR23404">
    <property type="entry name" value="MOLYBDOPTERIN SYNTHASE RELATED"/>
    <property type="match status" value="1"/>
</dbReference>
<dbReference type="Pfam" id="PF02391">
    <property type="entry name" value="MoaE"/>
    <property type="match status" value="1"/>
</dbReference>
<dbReference type="SUPFAM" id="SSF54690">
    <property type="entry name" value="Molybdopterin synthase subunit MoaE"/>
    <property type="match status" value="1"/>
</dbReference>
<organism>
    <name type="scientific">Emericella nidulans (strain FGSC A4 / ATCC 38163 / CBS 112.46 / NRRL 194 / M139)</name>
    <name type="common">Aspergillus nidulans</name>
    <dbReference type="NCBI Taxonomy" id="227321"/>
    <lineage>
        <taxon>Eukaryota</taxon>
        <taxon>Fungi</taxon>
        <taxon>Dikarya</taxon>
        <taxon>Ascomycota</taxon>
        <taxon>Pezizomycotina</taxon>
        <taxon>Eurotiomycetes</taxon>
        <taxon>Eurotiomycetidae</taxon>
        <taxon>Eurotiales</taxon>
        <taxon>Aspergillaceae</taxon>
        <taxon>Aspergillus</taxon>
        <taxon>Aspergillus subgen. Nidulantes</taxon>
    </lineage>
</organism>
<sequence length="195" mass="21611">MSARPEPQPGSERNATEPLPSHLDPTTYPRTLTTTHGPTSIPLHLELTYHTLSPTTALQHVSSPSSGANILFLGTTRDTFDDRPVARLSYTSYPALALKSLHKISSEAVEKFGLNGVYIAHRLGEVPVGEASIVVAVGAGHRGEAWRGAEWVLEVVKERVEVWKREEFVDGGMEWRENRERDGFGKLKTKKEDSR</sequence>
<feature type="chain" id="PRO_0000369355" description="Molybdopterin synthase catalytic subunit">
    <location>
        <begin position="1"/>
        <end position="195"/>
    </location>
</feature>
<feature type="region of interest" description="Disordered" evidence="2">
    <location>
        <begin position="1"/>
        <end position="37"/>
    </location>
</feature>
<feature type="compositionally biased region" description="Low complexity" evidence="2">
    <location>
        <begin position="25"/>
        <end position="37"/>
    </location>
</feature>
<feature type="binding site" evidence="1">
    <location>
        <begin position="141"/>
        <end position="142"/>
    </location>
    <ligand>
        <name>substrate</name>
    </ligand>
</feature>
<feature type="binding site" evidence="1">
    <location>
        <position position="157"/>
    </location>
    <ligand>
        <name>substrate</name>
    </ligand>
</feature>
<feature type="binding site" evidence="1">
    <location>
        <begin position="164"/>
        <end position="166"/>
    </location>
    <ligand>
        <name>substrate</name>
    </ligand>
</feature>
<feature type="mutagenesis site" description="In cnxH89; impairs molybdopterin biosynthesis." evidence="3">
    <original>G</original>
    <variation>D</variation>
    <location>
        <position position="74"/>
    </location>
</feature>
<feature type="mutagenesis site" description="In cnxH35/cnxH36; impairs molybdopterin biosynthesis." evidence="3">
    <original>A</original>
    <variation>T</variation>
    <location>
        <position position="108"/>
    </location>
</feature>
<feature type="mutagenesis site" description="In cnxH604; impairs molybdopterin biosynthesis." evidence="3">
    <original>G</original>
    <variation>D</variation>
    <location>
        <position position="148"/>
    </location>
</feature>
<feature type="mutagenesis site" description="In cnxH255; impairs molybdopterin biosynthesis." evidence="3">
    <original>G</original>
    <variation>GG</variation>
    <location>
        <position position="148"/>
    </location>
</feature>
<feature type="mutagenesis site" description="In cnxH43; impairs molybdopterin biosynthesis." evidence="3">
    <original>E</original>
    <variation>K</variation>
    <location>
        <position position="166"/>
    </location>
</feature>
<feature type="mutagenesis site" description="In cnxH1; impairs molybdopterin biosynthesis." evidence="3">
    <original>R</original>
    <variation>RCLESYGTRLDRMDIINTRMVAWTRKGNILIPL</variation>
    <location>
        <position position="195"/>
    </location>
</feature>
<accession>Q9Y8C1</accession>
<accession>C8VA81</accession>
<accession>Q5B3N9</accession>
<evidence type="ECO:0000255" key="1">
    <source>
        <dbReference type="HAMAP-Rule" id="MF_03052"/>
    </source>
</evidence>
<evidence type="ECO:0000256" key="2">
    <source>
        <dbReference type="SAM" id="MobiDB-lite"/>
    </source>
</evidence>
<evidence type="ECO:0000269" key="3">
    <source>
    </source>
</evidence>
<proteinExistence type="evidence at protein level"/>